<evidence type="ECO:0000255" key="1">
    <source>
        <dbReference type="HAMAP-Rule" id="MF_00693"/>
    </source>
</evidence>
<organism>
    <name type="scientific">Neisseria meningitidis serogroup C / serotype 2a (strain ATCC 700532 / DSM 15464 / FAM18)</name>
    <dbReference type="NCBI Taxonomy" id="272831"/>
    <lineage>
        <taxon>Bacteria</taxon>
        <taxon>Pseudomonadati</taxon>
        <taxon>Pseudomonadota</taxon>
        <taxon>Betaproteobacteria</taxon>
        <taxon>Neisseriales</taxon>
        <taxon>Neisseriaceae</taxon>
        <taxon>Neisseria</taxon>
    </lineage>
</organism>
<accession>A1KV56</accession>
<name>Y1563_NEIMF</name>
<dbReference type="EMBL" id="AM421808">
    <property type="protein sequence ID" value="CAM10757.1"/>
    <property type="molecule type" value="Genomic_DNA"/>
</dbReference>
<dbReference type="RefSeq" id="WP_002212681.1">
    <property type="nucleotide sequence ID" value="NC_008767.1"/>
</dbReference>
<dbReference type="SMR" id="A1KV56"/>
<dbReference type="KEGG" id="nmc:NMC1563"/>
<dbReference type="HOGENOM" id="CLU_062974_2_2_4"/>
<dbReference type="Proteomes" id="UP000002286">
    <property type="component" value="Chromosome"/>
</dbReference>
<dbReference type="GO" id="GO:0005829">
    <property type="term" value="C:cytosol"/>
    <property type="evidence" value="ECO:0007669"/>
    <property type="project" value="TreeGrafter"/>
</dbReference>
<dbReference type="GO" id="GO:0003677">
    <property type="term" value="F:DNA binding"/>
    <property type="evidence" value="ECO:0007669"/>
    <property type="project" value="UniProtKB-UniRule"/>
</dbReference>
<dbReference type="GO" id="GO:0006355">
    <property type="term" value="P:regulation of DNA-templated transcription"/>
    <property type="evidence" value="ECO:0007669"/>
    <property type="project" value="UniProtKB-UniRule"/>
</dbReference>
<dbReference type="FunFam" id="1.10.10.200:FF:000001">
    <property type="entry name" value="Probable transcriptional regulatory protein YebC"/>
    <property type="match status" value="1"/>
</dbReference>
<dbReference type="FunFam" id="3.30.70.980:FF:000002">
    <property type="entry name" value="Probable transcriptional regulatory protein YebC"/>
    <property type="match status" value="1"/>
</dbReference>
<dbReference type="Gene3D" id="1.10.10.200">
    <property type="match status" value="1"/>
</dbReference>
<dbReference type="Gene3D" id="3.30.70.980">
    <property type="match status" value="2"/>
</dbReference>
<dbReference type="HAMAP" id="MF_00693">
    <property type="entry name" value="Transcrip_reg_TACO1"/>
    <property type="match status" value="1"/>
</dbReference>
<dbReference type="InterPro" id="IPR017856">
    <property type="entry name" value="Integrase-like_N"/>
</dbReference>
<dbReference type="InterPro" id="IPR048300">
    <property type="entry name" value="TACO1_YebC-like_2nd/3rd_dom"/>
</dbReference>
<dbReference type="InterPro" id="IPR049083">
    <property type="entry name" value="TACO1_YebC_N"/>
</dbReference>
<dbReference type="InterPro" id="IPR002876">
    <property type="entry name" value="Transcrip_reg_TACO1-like"/>
</dbReference>
<dbReference type="InterPro" id="IPR026564">
    <property type="entry name" value="Transcrip_reg_TACO1-like_dom3"/>
</dbReference>
<dbReference type="InterPro" id="IPR029072">
    <property type="entry name" value="YebC-like"/>
</dbReference>
<dbReference type="NCBIfam" id="NF001030">
    <property type="entry name" value="PRK00110.1"/>
    <property type="match status" value="1"/>
</dbReference>
<dbReference type="NCBIfam" id="NF009044">
    <property type="entry name" value="PRK12378.1"/>
    <property type="match status" value="1"/>
</dbReference>
<dbReference type="NCBIfam" id="TIGR01033">
    <property type="entry name" value="YebC/PmpR family DNA-binding transcriptional regulator"/>
    <property type="match status" value="1"/>
</dbReference>
<dbReference type="PANTHER" id="PTHR12532:SF6">
    <property type="entry name" value="TRANSCRIPTIONAL REGULATORY PROTEIN YEBC-RELATED"/>
    <property type="match status" value="1"/>
</dbReference>
<dbReference type="PANTHER" id="PTHR12532">
    <property type="entry name" value="TRANSLATIONAL ACTIVATOR OF CYTOCHROME C OXIDASE 1"/>
    <property type="match status" value="1"/>
</dbReference>
<dbReference type="Pfam" id="PF20772">
    <property type="entry name" value="TACO1_YebC_N"/>
    <property type="match status" value="1"/>
</dbReference>
<dbReference type="Pfam" id="PF01709">
    <property type="entry name" value="Transcrip_reg"/>
    <property type="match status" value="1"/>
</dbReference>
<dbReference type="SUPFAM" id="SSF75625">
    <property type="entry name" value="YebC-like"/>
    <property type="match status" value="1"/>
</dbReference>
<protein>
    <recommendedName>
        <fullName evidence="1">Probable transcriptional regulatory protein NMC1563</fullName>
    </recommendedName>
</protein>
<feature type="chain" id="PRO_1000045345" description="Probable transcriptional regulatory protein NMC1563">
    <location>
        <begin position="1"/>
        <end position="242"/>
    </location>
</feature>
<gene>
    <name type="ordered locus">NMC1563</name>
</gene>
<comment type="subcellular location">
    <subcellularLocation>
        <location evidence="1">Cytoplasm</location>
    </subcellularLocation>
</comment>
<comment type="similarity">
    <text evidence="1">Belongs to the TACO1 family.</text>
</comment>
<reference key="1">
    <citation type="journal article" date="2007" name="PLoS Genet.">
        <title>Meningococcal genetic variation mechanisms viewed through comparative analysis of serogroup C strain FAM18.</title>
        <authorList>
            <person name="Bentley S.D."/>
            <person name="Vernikos G.S."/>
            <person name="Snyder L.A.S."/>
            <person name="Churcher C."/>
            <person name="Arrowsmith C."/>
            <person name="Chillingworth T."/>
            <person name="Cronin A."/>
            <person name="Davis P.H."/>
            <person name="Holroyd N.E."/>
            <person name="Jagels K."/>
            <person name="Maddison M."/>
            <person name="Moule S."/>
            <person name="Rabbinowitsch E."/>
            <person name="Sharp S."/>
            <person name="Unwin L."/>
            <person name="Whitehead S."/>
            <person name="Quail M.A."/>
            <person name="Achtman M."/>
            <person name="Barrell B.G."/>
            <person name="Saunders N.J."/>
            <person name="Parkhill J."/>
        </authorList>
    </citation>
    <scope>NUCLEOTIDE SEQUENCE [LARGE SCALE GENOMIC DNA]</scope>
    <source>
        <strain>ATCC 700532 / DSM 15464 / FAM18</strain>
    </source>
</reference>
<keyword id="KW-0963">Cytoplasm</keyword>
<keyword id="KW-0238">DNA-binding</keyword>
<keyword id="KW-0804">Transcription</keyword>
<keyword id="KW-0805">Transcription regulation</keyword>
<sequence>MAGHSKWANIQHKKARQDAKRGKIFTRLIKEITVAARMGGGDPGANPRLRLALEKAAENNMPKDNVQRAIDKGTGNLEGVEYIELRYEGYGIGGAALMVDCLTDNKTRTVADVRHAFTKNGGNLGTDGCVAFNFVHQGYLVFEPGVDEDALMEAALEAGAEDVVTNDDGSIEVITAPNDWAGVKSALEAAGYKSVDGDVTMRAQNETELSGDDAVKMQKLIDALEDLDDVQDVYTSAVLNLD</sequence>
<proteinExistence type="inferred from homology"/>